<proteinExistence type="evidence at transcript level"/>
<comment type="function">
    <text evidence="3">Catalyzes the formation of aromatic C18 estrogens from C19 androgens.</text>
</comment>
<comment type="catalytic activity">
    <reaction evidence="2">
        <text>testosterone + 3 reduced [NADPH--hemoprotein reductase] + 3 O2 = 17beta-estradiol + formate + 3 oxidized [NADPH--hemoprotein reductase] + 4 H2O + 4 H(+)</text>
        <dbReference type="Rhea" id="RHEA:38191"/>
        <dbReference type="Rhea" id="RHEA-COMP:11964"/>
        <dbReference type="Rhea" id="RHEA-COMP:11965"/>
        <dbReference type="ChEBI" id="CHEBI:15377"/>
        <dbReference type="ChEBI" id="CHEBI:15378"/>
        <dbReference type="ChEBI" id="CHEBI:15379"/>
        <dbReference type="ChEBI" id="CHEBI:15740"/>
        <dbReference type="ChEBI" id="CHEBI:16469"/>
        <dbReference type="ChEBI" id="CHEBI:17347"/>
        <dbReference type="ChEBI" id="CHEBI:57618"/>
        <dbReference type="ChEBI" id="CHEBI:58210"/>
        <dbReference type="EC" id="1.14.14.14"/>
    </reaction>
</comment>
<comment type="catalytic activity">
    <reaction evidence="2">
        <text>androst-4-ene-3,17-dione + 3 reduced [NADPH--hemoprotein reductase] + 3 O2 = estrone + formate + 3 oxidized [NADPH--hemoprotein reductase] + 4 H2O + 4 H(+)</text>
        <dbReference type="Rhea" id="RHEA:38195"/>
        <dbReference type="Rhea" id="RHEA-COMP:11964"/>
        <dbReference type="Rhea" id="RHEA-COMP:11965"/>
        <dbReference type="ChEBI" id="CHEBI:15377"/>
        <dbReference type="ChEBI" id="CHEBI:15378"/>
        <dbReference type="ChEBI" id="CHEBI:15379"/>
        <dbReference type="ChEBI" id="CHEBI:15740"/>
        <dbReference type="ChEBI" id="CHEBI:16422"/>
        <dbReference type="ChEBI" id="CHEBI:17263"/>
        <dbReference type="ChEBI" id="CHEBI:57618"/>
        <dbReference type="ChEBI" id="CHEBI:58210"/>
        <dbReference type="EC" id="1.14.14.14"/>
    </reaction>
</comment>
<comment type="cofactor">
    <cofactor evidence="1">
        <name>heme</name>
        <dbReference type="ChEBI" id="CHEBI:30413"/>
    </cofactor>
</comment>
<comment type="subcellular location">
    <subcellularLocation>
        <location>Membrane</location>
        <topology>Peripheral membrane protein</topology>
    </subcellularLocation>
</comment>
<comment type="tissue specificity">
    <text evidence="3">Expressed in ovary. It is also found in the brain, but not in the spleen, head kidney, kidney or liver.</text>
</comment>
<comment type="similarity">
    <text evidence="4">Belongs to the cytochrome P450 family.</text>
</comment>
<organism>
    <name type="scientific">Anguilla japonica</name>
    <name type="common">Japanese eel</name>
    <dbReference type="NCBI Taxonomy" id="7937"/>
    <lineage>
        <taxon>Eukaryota</taxon>
        <taxon>Metazoa</taxon>
        <taxon>Chordata</taxon>
        <taxon>Craniata</taxon>
        <taxon>Vertebrata</taxon>
        <taxon>Euteleostomi</taxon>
        <taxon>Actinopterygii</taxon>
        <taxon>Neopterygii</taxon>
        <taxon>Teleostei</taxon>
        <taxon>Anguilliformes</taxon>
        <taxon>Anguillidae</taxon>
        <taxon>Anguilla</taxon>
    </lineage>
</organism>
<dbReference type="EC" id="1.14.14.14" evidence="2"/>
<dbReference type="EMBL" id="AY540622">
    <property type="protein sequence ID" value="AAS47028.1"/>
    <property type="molecule type" value="mRNA"/>
</dbReference>
<dbReference type="SMR" id="Q6QHT9"/>
<dbReference type="GO" id="GO:0005783">
    <property type="term" value="C:endoplasmic reticulum"/>
    <property type="evidence" value="ECO:0007669"/>
    <property type="project" value="TreeGrafter"/>
</dbReference>
<dbReference type="GO" id="GO:0016020">
    <property type="term" value="C:membrane"/>
    <property type="evidence" value="ECO:0007669"/>
    <property type="project" value="UniProtKB-SubCell"/>
</dbReference>
<dbReference type="GO" id="GO:0070330">
    <property type="term" value="F:aromatase activity"/>
    <property type="evidence" value="ECO:0007669"/>
    <property type="project" value="UniProtKB-EC"/>
</dbReference>
<dbReference type="GO" id="GO:0020037">
    <property type="term" value="F:heme binding"/>
    <property type="evidence" value="ECO:0007669"/>
    <property type="project" value="InterPro"/>
</dbReference>
<dbReference type="GO" id="GO:0005506">
    <property type="term" value="F:iron ion binding"/>
    <property type="evidence" value="ECO:0007669"/>
    <property type="project" value="InterPro"/>
</dbReference>
<dbReference type="GO" id="GO:0008585">
    <property type="term" value="P:female gonad development"/>
    <property type="evidence" value="ECO:0007669"/>
    <property type="project" value="TreeGrafter"/>
</dbReference>
<dbReference type="GO" id="GO:0006629">
    <property type="term" value="P:lipid metabolic process"/>
    <property type="evidence" value="ECO:0007669"/>
    <property type="project" value="UniProtKB-KW"/>
</dbReference>
<dbReference type="GO" id="GO:0032355">
    <property type="term" value="P:response to estradiol"/>
    <property type="evidence" value="ECO:0007669"/>
    <property type="project" value="TreeGrafter"/>
</dbReference>
<dbReference type="CDD" id="cd20616">
    <property type="entry name" value="CYP19A1"/>
    <property type="match status" value="1"/>
</dbReference>
<dbReference type="FunFam" id="1.10.630.10:FF:000032">
    <property type="entry name" value="Cytochrome P450 aromatase"/>
    <property type="match status" value="1"/>
</dbReference>
<dbReference type="Gene3D" id="1.10.630.10">
    <property type="entry name" value="Cytochrome P450"/>
    <property type="match status" value="1"/>
</dbReference>
<dbReference type="InterPro" id="IPR001128">
    <property type="entry name" value="Cyt_P450"/>
</dbReference>
<dbReference type="InterPro" id="IPR017972">
    <property type="entry name" value="Cyt_P450_CS"/>
</dbReference>
<dbReference type="InterPro" id="IPR002401">
    <property type="entry name" value="Cyt_P450_E_grp-I"/>
</dbReference>
<dbReference type="InterPro" id="IPR036396">
    <property type="entry name" value="Cyt_P450_sf"/>
</dbReference>
<dbReference type="InterPro" id="IPR050196">
    <property type="entry name" value="Cytochrome_P450_Monoox"/>
</dbReference>
<dbReference type="PANTHER" id="PTHR24291:SF43">
    <property type="entry name" value="AROMATASE"/>
    <property type="match status" value="1"/>
</dbReference>
<dbReference type="PANTHER" id="PTHR24291">
    <property type="entry name" value="CYTOCHROME P450 FAMILY 4"/>
    <property type="match status" value="1"/>
</dbReference>
<dbReference type="Pfam" id="PF00067">
    <property type="entry name" value="p450"/>
    <property type="match status" value="1"/>
</dbReference>
<dbReference type="PRINTS" id="PR00463">
    <property type="entry name" value="EP450I"/>
</dbReference>
<dbReference type="PRINTS" id="PR00385">
    <property type="entry name" value="P450"/>
</dbReference>
<dbReference type="SUPFAM" id="SSF48264">
    <property type="entry name" value="Cytochrome P450"/>
    <property type="match status" value="1"/>
</dbReference>
<dbReference type="PROSITE" id="PS00086">
    <property type="entry name" value="CYTOCHROME_P450"/>
    <property type="match status" value="1"/>
</dbReference>
<evidence type="ECO:0000250" key="1"/>
<evidence type="ECO:0000250" key="2">
    <source>
        <dbReference type="UniProtKB" id="P11511"/>
    </source>
</evidence>
<evidence type="ECO:0000269" key="3">
    <source>
    </source>
</evidence>
<evidence type="ECO:0000305" key="4"/>
<keyword id="KW-0349">Heme</keyword>
<keyword id="KW-0408">Iron</keyword>
<keyword id="KW-0443">Lipid metabolism</keyword>
<keyword id="KW-0472">Membrane</keyword>
<keyword id="KW-0479">Metal-binding</keyword>
<keyword id="KW-0503">Monooxygenase</keyword>
<keyword id="KW-0560">Oxidoreductase</keyword>
<reference key="1">
    <citation type="journal article" date="2003" name="Gen. Comp. Endocrinol.">
        <title>Characterization of a cDNA encoding P-450 aromatase (CYP19) from Japanese eel ovary and its expression in ovarian follicles during induced ovarian development.</title>
        <authorList>
            <person name="Ijiri S."/>
            <person name="Kazeto Y."/>
            <person name="Lokman P.M."/>
            <person name="Adachi S."/>
            <person name="Yamauchi K."/>
        </authorList>
    </citation>
    <scope>NUCLEOTIDE SEQUENCE [MRNA]</scope>
    <scope>FUNCTION</scope>
    <scope>TISSUE SPECIFICITY</scope>
    <source>
        <tissue>Ovary</tissue>
    </source>
</reference>
<feature type="chain" id="PRO_0000051966" description="Aromatase">
    <location>
        <begin position="1"/>
        <end position="511"/>
    </location>
</feature>
<protein>
    <recommendedName>
        <fullName>Aromatase</fullName>
        <ecNumber evidence="2">1.14.14.14</ecNumber>
    </recommendedName>
    <alternativeName>
        <fullName>CYPXIX</fullName>
    </alternativeName>
    <alternativeName>
        <fullName>Cytochrome P-450AROM</fullName>
    </alternativeName>
    <alternativeName>
        <fullName>Cytochrome P450 19A1</fullName>
    </alternativeName>
    <alternativeName>
        <fullName>Estrogen synthase</fullName>
    </alternativeName>
</protein>
<sequence>MKHLEEIVMEALMPASRNATQTAGRVVSGATAALLSGATAALLLLLCALLAAWSRSDKSSVPGPPFYMGIGPLLSYFRFIWTGIGTASNYYNERYGDIVRVWINGEETIILSRSSAVYQVLRKPQYTSRFGSKQGLRCIGMHERGIIFNNNIELWKKVRTYFAKALTGPGLQRTVAICVASTDSHLDQLEELTDLSGQVDILNLLRCTIVDISNQMFLRVPLNEKELLVKIQKYFEAWQTVLIRPDFLFKFEWMYKEHKEAAHELHEAMEILVEKKRKALEEAEKLDDADFATDLIFAQNHGELSAENVQQCILEMIIAAPDTMSISLFFMLMLLKQNPEVEQEILKELDTVIGDKKAENSNLQHLIIMESFINESLRYHPVVDFTMRKSLEDDVIEGYKVFKGTNIILNVGRMHKCEFFSKPNEFSLENFEKTVPNRFFQPFGSGPRSCVGKHISMVMMKAILATLLSRYTMCPRDGRTLNNIRKTNNLSQQLAEKDSELTMMFTPRRRQ</sequence>
<accession>Q6QHT9</accession>
<gene>
    <name type="primary">cyp19a1</name>
    <name type="synonym">cyp19</name>
</gene>
<name>CP19A_ANGJA</name>